<gene>
    <name evidence="1" type="primary">rpoZ</name>
    <name type="ordered locus">SAK_0384</name>
</gene>
<feature type="chain" id="PRO_0000237511" description="DNA-directed RNA polymerase subunit omega">
    <location>
        <begin position="1"/>
        <end position="104"/>
    </location>
</feature>
<dbReference type="EC" id="2.7.7.6" evidence="1"/>
<dbReference type="EMBL" id="CP000114">
    <property type="protein sequence ID" value="ABA45354.1"/>
    <property type="molecule type" value="Genomic_DNA"/>
</dbReference>
<dbReference type="RefSeq" id="WP_000979239.1">
    <property type="nucleotide sequence ID" value="NC_007432.1"/>
</dbReference>
<dbReference type="SMR" id="Q3K367"/>
<dbReference type="GeneID" id="66885286"/>
<dbReference type="KEGG" id="sak:SAK_0384"/>
<dbReference type="HOGENOM" id="CLU_125406_0_0_9"/>
<dbReference type="GO" id="GO:0000428">
    <property type="term" value="C:DNA-directed RNA polymerase complex"/>
    <property type="evidence" value="ECO:0007669"/>
    <property type="project" value="UniProtKB-KW"/>
</dbReference>
<dbReference type="GO" id="GO:0003677">
    <property type="term" value="F:DNA binding"/>
    <property type="evidence" value="ECO:0007669"/>
    <property type="project" value="UniProtKB-UniRule"/>
</dbReference>
<dbReference type="GO" id="GO:0003899">
    <property type="term" value="F:DNA-directed RNA polymerase activity"/>
    <property type="evidence" value="ECO:0007669"/>
    <property type="project" value="UniProtKB-UniRule"/>
</dbReference>
<dbReference type="GO" id="GO:0006351">
    <property type="term" value="P:DNA-templated transcription"/>
    <property type="evidence" value="ECO:0007669"/>
    <property type="project" value="UniProtKB-UniRule"/>
</dbReference>
<dbReference type="Gene3D" id="3.90.940.10">
    <property type="match status" value="1"/>
</dbReference>
<dbReference type="HAMAP" id="MF_00366">
    <property type="entry name" value="RNApol_bact_RpoZ"/>
    <property type="match status" value="1"/>
</dbReference>
<dbReference type="InterPro" id="IPR003716">
    <property type="entry name" value="DNA-dir_RNA_pol_omega"/>
</dbReference>
<dbReference type="InterPro" id="IPR006110">
    <property type="entry name" value="Pol_omega/Rpo6/RPB6"/>
</dbReference>
<dbReference type="InterPro" id="IPR036161">
    <property type="entry name" value="RPB6/omega-like_sf"/>
</dbReference>
<dbReference type="NCBIfam" id="TIGR00690">
    <property type="entry name" value="rpoZ"/>
    <property type="match status" value="1"/>
</dbReference>
<dbReference type="PANTHER" id="PTHR34476">
    <property type="entry name" value="DNA-DIRECTED RNA POLYMERASE SUBUNIT OMEGA"/>
    <property type="match status" value="1"/>
</dbReference>
<dbReference type="PANTHER" id="PTHR34476:SF1">
    <property type="entry name" value="DNA-DIRECTED RNA POLYMERASE SUBUNIT OMEGA"/>
    <property type="match status" value="1"/>
</dbReference>
<dbReference type="Pfam" id="PF01192">
    <property type="entry name" value="RNA_pol_Rpb6"/>
    <property type="match status" value="1"/>
</dbReference>
<dbReference type="SMART" id="SM01409">
    <property type="entry name" value="RNA_pol_Rpb6"/>
    <property type="match status" value="1"/>
</dbReference>
<dbReference type="SUPFAM" id="SSF63562">
    <property type="entry name" value="RPB6/omega subunit-like"/>
    <property type="match status" value="1"/>
</dbReference>
<proteinExistence type="inferred from homology"/>
<protein>
    <recommendedName>
        <fullName evidence="1">DNA-directed RNA polymerase subunit omega</fullName>
        <shortName evidence="1">RNAP omega subunit</shortName>
        <ecNumber evidence="1">2.7.7.6</ecNumber>
    </recommendedName>
    <alternativeName>
        <fullName evidence="1">RNA polymerase omega subunit</fullName>
    </alternativeName>
    <alternativeName>
        <fullName evidence="1">Transcriptase subunit omega</fullName>
    </alternativeName>
</protein>
<name>RPOZ_STRA1</name>
<organism>
    <name type="scientific">Streptococcus agalactiae serotype Ia (strain ATCC 27591 / A909 / CDC SS700)</name>
    <dbReference type="NCBI Taxonomy" id="205921"/>
    <lineage>
        <taxon>Bacteria</taxon>
        <taxon>Bacillati</taxon>
        <taxon>Bacillota</taxon>
        <taxon>Bacilli</taxon>
        <taxon>Lactobacillales</taxon>
        <taxon>Streptococcaceae</taxon>
        <taxon>Streptococcus</taxon>
    </lineage>
</organism>
<evidence type="ECO:0000255" key="1">
    <source>
        <dbReference type="HAMAP-Rule" id="MF_00366"/>
    </source>
</evidence>
<sequence length="104" mass="11753">MMLKPSIDTLLDKVPSKYSLVILQAKRAHELEAGEKATQDFKSVKSTLRALEEIESGNVVIHPDPSAKRASVRARIEAERLAKEEEERKIKEQIAKEKEDGEKI</sequence>
<comment type="function">
    <text evidence="1">Promotes RNA polymerase assembly. Latches the N- and C-terminal regions of the beta' subunit thereby facilitating its interaction with the beta and alpha subunits.</text>
</comment>
<comment type="catalytic activity">
    <reaction evidence="1">
        <text>RNA(n) + a ribonucleoside 5'-triphosphate = RNA(n+1) + diphosphate</text>
        <dbReference type="Rhea" id="RHEA:21248"/>
        <dbReference type="Rhea" id="RHEA-COMP:14527"/>
        <dbReference type="Rhea" id="RHEA-COMP:17342"/>
        <dbReference type="ChEBI" id="CHEBI:33019"/>
        <dbReference type="ChEBI" id="CHEBI:61557"/>
        <dbReference type="ChEBI" id="CHEBI:140395"/>
        <dbReference type="EC" id="2.7.7.6"/>
    </reaction>
</comment>
<comment type="subunit">
    <text evidence="1">The RNAP catalytic core consists of 2 alpha, 1 beta, 1 beta' and 1 omega subunit. When a sigma factor is associated with the core the holoenzyme is formed, which can initiate transcription.</text>
</comment>
<comment type="similarity">
    <text evidence="1">Belongs to the RNA polymerase subunit omega family.</text>
</comment>
<reference key="1">
    <citation type="journal article" date="2005" name="Proc. Natl. Acad. Sci. U.S.A.">
        <title>Genome analysis of multiple pathogenic isolates of Streptococcus agalactiae: implications for the microbial 'pan-genome'.</title>
        <authorList>
            <person name="Tettelin H."/>
            <person name="Masignani V."/>
            <person name="Cieslewicz M.J."/>
            <person name="Donati C."/>
            <person name="Medini D."/>
            <person name="Ward N.L."/>
            <person name="Angiuoli S.V."/>
            <person name="Crabtree J."/>
            <person name="Jones A.L."/>
            <person name="Durkin A.S."/>
            <person name="DeBoy R.T."/>
            <person name="Davidsen T.M."/>
            <person name="Mora M."/>
            <person name="Scarselli M."/>
            <person name="Margarit y Ros I."/>
            <person name="Peterson J.D."/>
            <person name="Hauser C.R."/>
            <person name="Sundaram J.P."/>
            <person name="Nelson W.C."/>
            <person name="Madupu R."/>
            <person name="Brinkac L.M."/>
            <person name="Dodson R.J."/>
            <person name="Rosovitz M.J."/>
            <person name="Sullivan S.A."/>
            <person name="Daugherty S.C."/>
            <person name="Haft D.H."/>
            <person name="Selengut J."/>
            <person name="Gwinn M.L."/>
            <person name="Zhou L."/>
            <person name="Zafar N."/>
            <person name="Khouri H."/>
            <person name="Radune D."/>
            <person name="Dimitrov G."/>
            <person name="Watkins K."/>
            <person name="O'Connor K.J."/>
            <person name="Smith S."/>
            <person name="Utterback T.R."/>
            <person name="White O."/>
            <person name="Rubens C.E."/>
            <person name="Grandi G."/>
            <person name="Madoff L.C."/>
            <person name="Kasper D.L."/>
            <person name="Telford J.L."/>
            <person name="Wessels M.R."/>
            <person name="Rappuoli R."/>
            <person name="Fraser C.M."/>
        </authorList>
    </citation>
    <scope>NUCLEOTIDE SEQUENCE [LARGE SCALE GENOMIC DNA]</scope>
    <source>
        <strain>ATCC 27591 / A909 / CDC SS700</strain>
    </source>
</reference>
<keyword id="KW-0240">DNA-directed RNA polymerase</keyword>
<keyword id="KW-0548">Nucleotidyltransferase</keyword>
<keyword id="KW-0804">Transcription</keyword>
<keyword id="KW-0808">Transferase</keyword>
<accession>Q3K367</accession>